<protein>
    <recommendedName>
        <fullName>Homeobox protein MSX-2</fullName>
    </recommendedName>
    <alternativeName>
        <fullName>Homeobox protein Hox-8</fullName>
    </alternativeName>
</protein>
<feature type="chain" id="PRO_0000049098" description="Homeobox protein MSX-2">
    <location>
        <begin position="1"/>
        <end position="267"/>
    </location>
</feature>
<feature type="DNA-binding region" description="Homeobox" evidence="2">
    <location>
        <begin position="142"/>
        <end position="201"/>
    </location>
</feature>
<feature type="region of interest" description="Disordered" evidence="3">
    <location>
        <begin position="1"/>
        <end position="147"/>
    </location>
</feature>
<feature type="compositionally biased region" description="Low complexity" evidence="3">
    <location>
        <begin position="69"/>
        <end position="84"/>
    </location>
</feature>
<feature type="compositionally biased region" description="Basic residues" evidence="3">
    <location>
        <begin position="136"/>
        <end position="146"/>
    </location>
</feature>
<dbReference type="EMBL" id="AJ277753">
    <property type="protein sequence ID" value="CAC19897.1"/>
    <property type="molecule type" value="mRNA"/>
</dbReference>
<dbReference type="EMBL" id="AJ303104">
    <property type="protein sequence ID" value="CAC37368.1"/>
    <property type="molecule type" value="Genomic_DNA"/>
</dbReference>
<dbReference type="EMBL" id="AJ303105">
    <property type="protein sequence ID" value="CAC37368.1"/>
    <property type="status" value="JOINED"/>
    <property type="molecule type" value="Genomic_DNA"/>
</dbReference>
<dbReference type="RefSeq" id="NP_001003098.1">
    <property type="nucleotide sequence ID" value="NM_001003098.2"/>
</dbReference>
<dbReference type="SMR" id="Q9GK08"/>
<dbReference type="FunCoup" id="Q9GK08">
    <property type="interactions" value="44"/>
</dbReference>
<dbReference type="STRING" id="9615.ENSCAFP00000041488"/>
<dbReference type="PaxDb" id="9612-ENSCAFP00000041488"/>
<dbReference type="Ensembl" id="ENSCAFT00000046226.3">
    <property type="protein sequence ID" value="ENSCAFP00000041488.1"/>
    <property type="gene ID" value="ENSCAFG00000016731.6"/>
</dbReference>
<dbReference type="Ensembl" id="ENSCAFT00030003789.1">
    <property type="protein sequence ID" value="ENSCAFP00030003362.1"/>
    <property type="gene ID" value="ENSCAFG00030002082.1"/>
</dbReference>
<dbReference type="Ensembl" id="ENSCAFT00040034730.1">
    <property type="protein sequence ID" value="ENSCAFP00040030240.1"/>
    <property type="gene ID" value="ENSCAFG00040018772.1"/>
</dbReference>
<dbReference type="Ensembl" id="ENSCAFT00845000718.1">
    <property type="protein sequence ID" value="ENSCAFP00845000523.1"/>
    <property type="gene ID" value="ENSCAFG00845000450.1"/>
</dbReference>
<dbReference type="GeneID" id="403663"/>
<dbReference type="KEGG" id="cfa:403663"/>
<dbReference type="CTD" id="4488"/>
<dbReference type="VEuPathDB" id="HostDB:ENSCAFG00845000450"/>
<dbReference type="VGNC" id="VGNC:43455">
    <property type="gene designation" value="MSX2"/>
</dbReference>
<dbReference type="eggNOG" id="KOG0492">
    <property type="taxonomic scope" value="Eukaryota"/>
</dbReference>
<dbReference type="GeneTree" id="ENSGT00940000159824"/>
<dbReference type="HOGENOM" id="CLU_072675_0_0_1"/>
<dbReference type="InParanoid" id="Q9GK08"/>
<dbReference type="OMA" id="PVGYNMY"/>
<dbReference type="OrthoDB" id="6159439at2759"/>
<dbReference type="TreeFam" id="TF350699"/>
<dbReference type="Proteomes" id="UP000002254">
    <property type="component" value="Chromosome 4"/>
</dbReference>
<dbReference type="Proteomes" id="UP000694429">
    <property type="component" value="Chromosome 4"/>
</dbReference>
<dbReference type="Proteomes" id="UP000694542">
    <property type="component" value="Chromosome 4"/>
</dbReference>
<dbReference type="Proteomes" id="UP000805418">
    <property type="component" value="Chromosome 4"/>
</dbReference>
<dbReference type="Bgee" id="ENSCAFG00000016731">
    <property type="expression patterns" value="Expressed in placenta and 29 other cell types or tissues"/>
</dbReference>
<dbReference type="GO" id="GO:0005829">
    <property type="term" value="C:cytosol"/>
    <property type="evidence" value="ECO:0007669"/>
    <property type="project" value="Ensembl"/>
</dbReference>
<dbReference type="GO" id="GO:0016607">
    <property type="term" value="C:nuclear speck"/>
    <property type="evidence" value="ECO:0007669"/>
    <property type="project" value="Ensembl"/>
</dbReference>
<dbReference type="GO" id="GO:0005634">
    <property type="term" value="C:nucleus"/>
    <property type="evidence" value="ECO:0000318"/>
    <property type="project" value="GO_Central"/>
</dbReference>
<dbReference type="GO" id="GO:0000981">
    <property type="term" value="F:DNA-binding transcription factor activity, RNA polymerase II-specific"/>
    <property type="evidence" value="ECO:0000318"/>
    <property type="project" value="GO_Central"/>
</dbReference>
<dbReference type="GO" id="GO:0000977">
    <property type="term" value="F:RNA polymerase II transcription regulatory region sequence-specific DNA binding"/>
    <property type="evidence" value="ECO:0000318"/>
    <property type="project" value="GO_Central"/>
</dbReference>
<dbReference type="GO" id="GO:0000976">
    <property type="term" value="F:transcription cis-regulatory region binding"/>
    <property type="evidence" value="ECO:0000250"/>
    <property type="project" value="UniProtKB"/>
</dbReference>
<dbReference type="GO" id="GO:0048598">
    <property type="term" value="P:embryonic morphogenesis"/>
    <property type="evidence" value="ECO:0000318"/>
    <property type="project" value="GO_Central"/>
</dbReference>
<dbReference type="GO" id="GO:0045892">
    <property type="term" value="P:negative regulation of DNA-templated transcription"/>
    <property type="evidence" value="ECO:0000250"/>
    <property type="project" value="UniProtKB"/>
</dbReference>
<dbReference type="GO" id="GO:0000122">
    <property type="term" value="P:negative regulation of transcription by RNA polymerase II"/>
    <property type="evidence" value="ECO:0000250"/>
    <property type="project" value="UniProtKB"/>
</dbReference>
<dbReference type="GO" id="GO:0001649">
    <property type="term" value="P:osteoblast differentiation"/>
    <property type="evidence" value="ECO:0000250"/>
    <property type="project" value="UniProtKB"/>
</dbReference>
<dbReference type="GO" id="GO:0006357">
    <property type="term" value="P:regulation of transcription by RNA polymerase II"/>
    <property type="evidence" value="ECO:0000318"/>
    <property type="project" value="GO_Central"/>
</dbReference>
<dbReference type="CDD" id="cd00086">
    <property type="entry name" value="homeodomain"/>
    <property type="match status" value="1"/>
</dbReference>
<dbReference type="FunFam" id="1.10.10.60:FF:000134">
    <property type="entry name" value="Homeobox protein MSX-1"/>
    <property type="match status" value="1"/>
</dbReference>
<dbReference type="Gene3D" id="1.10.10.60">
    <property type="entry name" value="Homeodomain-like"/>
    <property type="match status" value="1"/>
</dbReference>
<dbReference type="InterPro" id="IPR001356">
    <property type="entry name" value="HD"/>
</dbReference>
<dbReference type="InterPro" id="IPR020479">
    <property type="entry name" value="HD_metazoa"/>
</dbReference>
<dbReference type="InterPro" id="IPR017970">
    <property type="entry name" value="Homeobox_CS"/>
</dbReference>
<dbReference type="InterPro" id="IPR009057">
    <property type="entry name" value="Homeodomain-like_sf"/>
</dbReference>
<dbReference type="InterPro" id="IPR050674">
    <property type="entry name" value="Msh_Homeobox_Regulators"/>
</dbReference>
<dbReference type="PANTHER" id="PTHR24338">
    <property type="entry name" value="HOMEOBOX PROTEIN MSX"/>
    <property type="match status" value="1"/>
</dbReference>
<dbReference type="PANTHER" id="PTHR24338:SF10">
    <property type="entry name" value="HOMEOBOX PROTEIN MSX-2"/>
    <property type="match status" value="1"/>
</dbReference>
<dbReference type="Pfam" id="PF00046">
    <property type="entry name" value="Homeodomain"/>
    <property type="match status" value="1"/>
</dbReference>
<dbReference type="PRINTS" id="PR00024">
    <property type="entry name" value="HOMEOBOX"/>
</dbReference>
<dbReference type="SMART" id="SM00389">
    <property type="entry name" value="HOX"/>
    <property type="match status" value="1"/>
</dbReference>
<dbReference type="SUPFAM" id="SSF46689">
    <property type="entry name" value="Homeodomain-like"/>
    <property type="match status" value="1"/>
</dbReference>
<dbReference type="PROSITE" id="PS00027">
    <property type="entry name" value="HOMEOBOX_1"/>
    <property type="match status" value="1"/>
</dbReference>
<dbReference type="PROSITE" id="PS50071">
    <property type="entry name" value="HOMEOBOX_2"/>
    <property type="match status" value="1"/>
</dbReference>
<accession>Q9GK08</accession>
<keyword id="KW-0217">Developmental protein</keyword>
<keyword id="KW-0238">DNA-binding</keyword>
<keyword id="KW-0371">Homeobox</keyword>
<keyword id="KW-0539">Nucleus</keyword>
<keyword id="KW-0892">Osteogenesis</keyword>
<keyword id="KW-1185">Reference proteome</keyword>
<keyword id="KW-0678">Repressor</keyword>
<keyword id="KW-0804">Transcription</keyword>
<keyword id="KW-0805">Transcription regulation</keyword>
<evidence type="ECO:0000250" key="1"/>
<evidence type="ECO:0000255" key="2">
    <source>
        <dbReference type="PROSITE-ProRule" id="PRU00108"/>
    </source>
</evidence>
<evidence type="ECO:0000256" key="3">
    <source>
        <dbReference type="SAM" id="MobiDB-lite"/>
    </source>
</evidence>
<evidence type="ECO:0000305" key="4"/>
<proteinExistence type="evidence at transcript level"/>
<organism>
    <name type="scientific">Canis lupus familiaris</name>
    <name type="common">Dog</name>
    <name type="synonym">Canis familiaris</name>
    <dbReference type="NCBI Taxonomy" id="9615"/>
    <lineage>
        <taxon>Eukaryota</taxon>
        <taxon>Metazoa</taxon>
        <taxon>Chordata</taxon>
        <taxon>Craniata</taxon>
        <taxon>Vertebrata</taxon>
        <taxon>Euteleostomi</taxon>
        <taxon>Mammalia</taxon>
        <taxon>Eutheria</taxon>
        <taxon>Laurasiatheria</taxon>
        <taxon>Carnivora</taxon>
        <taxon>Caniformia</taxon>
        <taxon>Canidae</taxon>
        <taxon>Canis</taxon>
    </lineage>
</organism>
<reference key="1">
    <citation type="submission" date="2000-05" db="EMBL/GenBank/DDBJ databases">
        <title>The homeodomain Msx2 protein sequence is highly conserved between between domestic dog breeds of varying face and skull types.</title>
        <authorList>
            <person name="Haworth K.E."/>
            <person name="Edwards Y.H."/>
        </authorList>
    </citation>
    <scope>NUCLEOTIDE SEQUENCE [MRNA]</scope>
</reference>
<reference key="2">
    <citation type="journal article" date="2001" name="Anim. Genet.">
        <title>The canine homeobox gene MSX2: sequence, chromosome assignment and genetic analysis in dogs of different breeds.</title>
        <authorList>
            <person name="Haworth K."/>
            <person name="Breen M."/>
            <person name="Binns M."/>
            <person name="Hopkinson D.A."/>
            <person name="Edwards Y.H."/>
        </authorList>
    </citation>
    <scope>NUCLEOTIDE SEQUENCE [GENOMIC DNA]</scope>
</reference>
<comment type="function">
    <text evidence="1">Acts as a transcriptional regulator in bone development. Represses the ALPL promoter activity and antagonizes the stimulatory effect of DLX5 on ALPL expression during osteoblast differentiation. Probable morphogenetic role. May play a role in limb-pattern formation. In osteoblasts, suppresses transcription driven by the osteocalcin FGF response element (OCFRE). Binds to the homeodomain-response element of the ALPL promoter (By similarity).</text>
</comment>
<comment type="subunit">
    <text evidence="1">Interacts with MINT, with XRCC6 (Ku70) and XRCC5 (Ku80).</text>
</comment>
<comment type="subcellular location">
    <subcellularLocation>
        <location evidence="2">Nucleus</location>
    </subcellularLocation>
</comment>
<comment type="similarity">
    <text evidence="4">Belongs to the Msh homeobox family.</text>
</comment>
<name>MSX2_CANLF</name>
<sequence>MASPSKGSDLFSSDEEGPAALAGPGPGPGGAEGAAEERRVKVSSLPFSVEALMSDKKPPKGASPRPADSASAGAALRPLLLPGHGAREAPSPGPPGKPFEAASVKSESAEDGAAWMQEPGRYSPPPRHMSPTTCTLRKHKTNRKPRTPFTTSQLLALERKFRQKQYLSIAERAEFSSSLNLTETQVKIWFQNRRAKAKRLQEAELEKLKMAAKPMLPSGFSLPFPINSPLQAASIYGASYPFHRPVLPIPPVGLYATPVGYGMYHLS</sequence>
<gene>
    <name type="primary">MSX2</name>
</gene>